<dbReference type="EC" id="2.7.4.8"/>
<dbReference type="EMBL" id="AE002160">
    <property type="protein sequence ID" value="AAF39164.1"/>
    <property type="molecule type" value="Genomic_DNA"/>
</dbReference>
<dbReference type="PIR" id="F81718">
    <property type="entry name" value="F81718"/>
</dbReference>
<dbReference type="RefSeq" id="WP_010230085.1">
    <property type="nucleotide sequence ID" value="NZ_CP063055.1"/>
</dbReference>
<dbReference type="SMR" id="Q9PL09"/>
<dbReference type="GeneID" id="1246469"/>
<dbReference type="KEGG" id="cmu:TC_0299"/>
<dbReference type="eggNOG" id="COG0194">
    <property type="taxonomic scope" value="Bacteria"/>
</dbReference>
<dbReference type="HOGENOM" id="CLU_001715_1_1_0"/>
<dbReference type="OrthoDB" id="9808150at2"/>
<dbReference type="Proteomes" id="UP000000800">
    <property type="component" value="Chromosome"/>
</dbReference>
<dbReference type="GO" id="GO:0005829">
    <property type="term" value="C:cytosol"/>
    <property type="evidence" value="ECO:0007669"/>
    <property type="project" value="TreeGrafter"/>
</dbReference>
<dbReference type="GO" id="GO:0005524">
    <property type="term" value="F:ATP binding"/>
    <property type="evidence" value="ECO:0007669"/>
    <property type="project" value="UniProtKB-UniRule"/>
</dbReference>
<dbReference type="GO" id="GO:0004385">
    <property type="term" value="F:guanylate kinase activity"/>
    <property type="evidence" value="ECO:0007669"/>
    <property type="project" value="UniProtKB-UniRule"/>
</dbReference>
<dbReference type="CDD" id="cd00071">
    <property type="entry name" value="GMPK"/>
    <property type="match status" value="1"/>
</dbReference>
<dbReference type="FunFam" id="3.30.63.10:FF:000005">
    <property type="entry name" value="Guanylate kinase"/>
    <property type="match status" value="1"/>
</dbReference>
<dbReference type="Gene3D" id="3.30.63.10">
    <property type="entry name" value="Guanylate Kinase phosphate binding domain"/>
    <property type="match status" value="1"/>
</dbReference>
<dbReference type="Gene3D" id="3.40.50.300">
    <property type="entry name" value="P-loop containing nucleotide triphosphate hydrolases"/>
    <property type="match status" value="1"/>
</dbReference>
<dbReference type="HAMAP" id="MF_00328">
    <property type="entry name" value="Guanylate_kinase"/>
    <property type="match status" value="1"/>
</dbReference>
<dbReference type="InterPro" id="IPR008145">
    <property type="entry name" value="GK/Ca_channel_bsu"/>
</dbReference>
<dbReference type="InterPro" id="IPR008144">
    <property type="entry name" value="Guanylate_kin-like_dom"/>
</dbReference>
<dbReference type="InterPro" id="IPR017665">
    <property type="entry name" value="Guanylate_kinase"/>
</dbReference>
<dbReference type="InterPro" id="IPR020590">
    <property type="entry name" value="Guanylate_kinase_CS"/>
</dbReference>
<dbReference type="InterPro" id="IPR027417">
    <property type="entry name" value="P-loop_NTPase"/>
</dbReference>
<dbReference type="NCBIfam" id="TIGR03263">
    <property type="entry name" value="guanyl_kin"/>
    <property type="match status" value="1"/>
</dbReference>
<dbReference type="PANTHER" id="PTHR23117:SF13">
    <property type="entry name" value="GUANYLATE KINASE"/>
    <property type="match status" value="1"/>
</dbReference>
<dbReference type="PANTHER" id="PTHR23117">
    <property type="entry name" value="GUANYLATE KINASE-RELATED"/>
    <property type="match status" value="1"/>
</dbReference>
<dbReference type="Pfam" id="PF00625">
    <property type="entry name" value="Guanylate_kin"/>
    <property type="match status" value="1"/>
</dbReference>
<dbReference type="SMART" id="SM00072">
    <property type="entry name" value="GuKc"/>
    <property type="match status" value="1"/>
</dbReference>
<dbReference type="SUPFAM" id="SSF52540">
    <property type="entry name" value="P-loop containing nucleoside triphosphate hydrolases"/>
    <property type="match status" value="1"/>
</dbReference>
<dbReference type="PROSITE" id="PS00856">
    <property type="entry name" value="GUANYLATE_KINASE_1"/>
    <property type="match status" value="1"/>
</dbReference>
<dbReference type="PROSITE" id="PS50052">
    <property type="entry name" value="GUANYLATE_KINASE_2"/>
    <property type="match status" value="1"/>
</dbReference>
<proteinExistence type="inferred from homology"/>
<feature type="chain" id="PRO_0000170519" description="Guanylate kinase">
    <location>
        <begin position="1"/>
        <end position="205"/>
    </location>
</feature>
<feature type="domain" description="Guanylate kinase-like">
    <location>
        <begin position="18"/>
        <end position="196"/>
    </location>
</feature>
<feature type="binding site" evidence="1">
    <location>
        <begin position="25"/>
        <end position="32"/>
    </location>
    <ligand>
        <name>ATP</name>
        <dbReference type="ChEBI" id="CHEBI:30616"/>
    </ligand>
</feature>
<organism>
    <name type="scientific">Chlamydia muridarum (strain MoPn / Nigg)</name>
    <dbReference type="NCBI Taxonomy" id="243161"/>
    <lineage>
        <taxon>Bacteria</taxon>
        <taxon>Pseudomonadati</taxon>
        <taxon>Chlamydiota</taxon>
        <taxon>Chlamydiia</taxon>
        <taxon>Chlamydiales</taxon>
        <taxon>Chlamydiaceae</taxon>
        <taxon>Chlamydia/Chlamydophila group</taxon>
        <taxon>Chlamydia</taxon>
    </lineage>
</organism>
<accession>Q9PL09</accession>
<comment type="function">
    <text evidence="1">Essential for recycling GMP and indirectly, cGMP.</text>
</comment>
<comment type="catalytic activity">
    <reaction>
        <text>GMP + ATP = GDP + ADP</text>
        <dbReference type="Rhea" id="RHEA:20780"/>
        <dbReference type="ChEBI" id="CHEBI:30616"/>
        <dbReference type="ChEBI" id="CHEBI:58115"/>
        <dbReference type="ChEBI" id="CHEBI:58189"/>
        <dbReference type="ChEBI" id="CHEBI:456216"/>
        <dbReference type="EC" id="2.7.4.8"/>
    </reaction>
</comment>
<comment type="subcellular location">
    <subcellularLocation>
        <location evidence="1">Cytoplasm</location>
    </subcellularLocation>
</comment>
<comment type="similarity">
    <text evidence="2">Belongs to the guanylate kinase family.</text>
</comment>
<sequence length="205" mass="22977">MSVKVASPFSPDGVQCLPKLFTISAPAGAGKTTLVHMLQEEFPSAFEKTVSSTTRSPRPGEVHGVDYVFMSEDEFKDVLDKDGFLEWVFLFGTYYGTSKEGISRILQKGKHCIAVIDVQGALTLKKQMQTVAIFIQAPSQEELERRLNTRDSEKDLQKKERLEHSNVEIAAASQFDYVVVNDDLTTAYQVLRSIFIAEEHRMSHG</sequence>
<evidence type="ECO:0000250" key="1"/>
<evidence type="ECO:0000305" key="2"/>
<keyword id="KW-0067">ATP-binding</keyword>
<keyword id="KW-0963">Cytoplasm</keyword>
<keyword id="KW-0418">Kinase</keyword>
<keyword id="KW-0547">Nucleotide-binding</keyword>
<keyword id="KW-0808">Transferase</keyword>
<protein>
    <recommendedName>
        <fullName>Guanylate kinase</fullName>
        <ecNumber>2.7.4.8</ecNumber>
    </recommendedName>
    <alternativeName>
        <fullName>GMP kinase</fullName>
    </alternativeName>
</protein>
<reference key="1">
    <citation type="journal article" date="2000" name="Nucleic Acids Res.">
        <title>Genome sequences of Chlamydia trachomatis MoPn and Chlamydia pneumoniae AR39.</title>
        <authorList>
            <person name="Read T.D."/>
            <person name="Brunham R.C."/>
            <person name="Shen C."/>
            <person name="Gill S.R."/>
            <person name="Heidelberg J.F."/>
            <person name="White O."/>
            <person name="Hickey E.K."/>
            <person name="Peterson J.D."/>
            <person name="Utterback T.R."/>
            <person name="Berry K.J."/>
            <person name="Bass S."/>
            <person name="Linher K.D."/>
            <person name="Weidman J.F."/>
            <person name="Khouri H.M."/>
            <person name="Craven B."/>
            <person name="Bowman C."/>
            <person name="Dodson R.J."/>
            <person name="Gwinn M.L."/>
            <person name="Nelson W.C."/>
            <person name="DeBoy R.T."/>
            <person name="Kolonay J.F."/>
            <person name="McClarty G."/>
            <person name="Salzberg S.L."/>
            <person name="Eisen J.A."/>
            <person name="Fraser C.M."/>
        </authorList>
    </citation>
    <scope>NUCLEOTIDE SEQUENCE [LARGE SCALE GENOMIC DNA]</scope>
    <source>
        <strain>MoPn / Nigg</strain>
    </source>
</reference>
<name>KGUA_CHLMU</name>
<gene>
    <name type="primary">gmk</name>
    <name type="ordered locus">TC_0299</name>
</gene>